<keyword id="KW-0255">Endonuclease</keyword>
<keyword id="KW-0378">Hydrolase</keyword>
<keyword id="KW-0540">Nuclease</keyword>
<keyword id="KW-0694">RNA-binding</keyword>
<keyword id="KW-0698">rRNA processing</keyword>
<proteinExistence type="inferred from homology"/>
<gene>
    <name evidence="1" type="primary">fau-1</name>
    <name type="ordered locus">M1425_1132</name>
</gene>
<sequence length="424" mass="49146">MKGRVRIRGIYATALTSIFSSLSYEIVQQSVEIAERFMREVNNLPADITIKDFEYDRGKIIVMGNGTIEEDLHDVFKYSFHWKSPIKLYSVIEADESCTYGNFKVEPCLEEGIVIKPPYDGKIVLSETKAVSKYAMVWRGKGVTTFSEHINNEEERLRLLTLSSPLNRKGYNVKWRSNAKYATLNELKEDLERLVLRYENREFRDQGEDFYLITLSLPDKLHLDEVRKSIVNTVKYHHMLKLSYNREVDSLEKDKEGSPVKLLEALISDFMKIEHIKADGKAIYLRGGKVIEKEVNNDGYRITLRREINGNGVLDGIGKRIENGDYDIVEYNSDKWYQIHRYYSGIDNSLKGIYINISTPPELLKGKIRYLDLEIDIAIRDSEIIVLDEDELNKKSIYMHSSLVNKAKEVANYLIDCIQQNKLI</sequence>
<evidence type="ECO:0000255" key="1">
    <source>
        <dbReference type="HAMAP-Rule" id="MF_01910"/>
    </source>
</evidence>
<feature type="chain" id="PRO_1000216189" description="Probable ribonuclease FAU-1">
    <location>
        <begin position="1"/>
        <end position="424"/>
    </location>
</feature>
<name>FAU1_SACI4</name>
<organism>
    <name type="scientific">Saccharolobus islandicus (strain M.14.25 / Kamchatka #1)</name>
    <name type="common">Sulfolobus islandicus</name>
    <dbReference type="NCBI Taxonomy" id="427317"/>
    <lineage>
        <taxon>Archaea</taxon>
        <taxon>Thermoproteota</taxon>
        <taxon>Thermoprotei</taxon>
        <taxon>Sulfolobales</taxon>
        <taxon>Sulfolobaceae</taxon>
        <taxon>Saccharolobus</taxon>
    </lineage>
</organism>
<comment type="function">
    <text evidence="1">Probable RNase involved in rRNA stability through maturation and/or degradation of precursor rRNAs. Binds to RNA in loop regions with AU-rich sequences.</text>
</comment>
<comment type="similarity">
    <text evidence="1">Belongs to the FAU-1 family.</text>
</comment>
<protein>
    <recommendedName>
        <fullName evidence="1">Probable ribonuclease FAU-1</fullName>
        <ecNumber evidence="1">3.1.26.-</ecNumber>
    </recommendedName>
    <alternativeName>
        <fullName evidence="1">RNA-binding protein FAU-1</fullName>
    </alternativeName>
</protein>
<reference key="1">
    <citation type="journal article" date="2009" name="Proc. Natl. Acad. Sci. U.S.A.">
        <title>Biogeography of the Sulfolobus islandicus pan-genome.</title>
        <authorList>
            <person name="Reno M.L."/>
            <person name="Held N.L."/>
            <person name="Fields C.J."/>
            <person name="Burke P.V."/>
            <person name="Whitaker R.J."/>
        </authorList>
    </citation>
    <scope>NUCLEOTIDE SEQUENCE [LARGE SCALE GENOMIC DNA]</scope>
    <source>
        <strain>M.14.25 / Kamchatka #1</strain>
    </source>
</reference>
<dbReference type="EC" id="3.1.26.-" evidence="1"/>
<dbReference type="EMBL" id="CP001400">
    <property type="protein sequence ID" value="ACP37894.1"/>
    <property type="molecule type" value="Genomic_DNA"/>
</dbReference>
<dbReference type="RefSeq" id="WP_012711156.1">
    <property type="nucleotide sequence ID" value="NC_012588.1"/>
</dbReference>
<dbReference type="SMR" id="C3MXY8"/>
<dbReference type="KEGG" id="sia:M1425_1132"/>
<dbReference type="HOGENOM" id="CLU_044303_0_0_2"/>
<dbReference type="Proteomes" id="UP000001350">
    <property type="component" value="Chromosome"/>
</dbReference>
<dbReference type="GO" id="GO:0035925">
    <property type="term" value="F:mRNA 3'-UTR AU-rich region binding"/>
    <property type="evidence" value="ECO:0007669"/>
    <property type="project" value="UniProtKB-UniRule"/>
</dbReference>
<dbReference type="GO" id="GO:0016891">
    <property type="term" value="F:RNA endonuclease activity, producing 5'-phosphomonoesters"/>
    <property type="evidence" value="ECO:0007669"/>
    <property type="project" value="UniProtKB-UniRule"/>
</dbReference>
<dbReference type="GO" id="GO:0006364">
    <property type="term" value="P:rRNA processing"/>
    <property type="evidence" value="ECO:0007669"/>
    <property type="project" value="UniProtKB-UniRule"/>
</dbReference>
<dbReference type="Gene3D" id="2.40.380.10">
    <property type="entry name" value="FomD-like"/>
    <property type="match status" value="1"/>
</dbReference>
<dbReference type="HAMAP" id="MF_01910">
    <property type="entry name" value="RNA_binding_AU_1"/>
    <property type="match status" value="1"/>
</dbReference>
<dbReference type="InterPro" id="IPR007295">
    <property type="entry name" value="DUF402"/>
</dbReference>
<dbReference type="InterPro" id="IPR035930">
    <property type="entry name" value="FomD-like_sf"/>
</dbReference>
<dbReference type="InterPro" id="IPR050212">
    <property type="entry name" value="Ntdp-like"/>
</dbReference>
<dbReference type="InterPro" id="IPR016730">
    <property type="entry name" value="RNA-bd_FAU-1"/>
</dbReference>
<dbReference type="PANTHER" id="PTHR39159">
    <property type="match status" value="1"/>
</dbReference>
<dbReference type="PANTHER" id="PTHR39159:SF1">
    <property type="entry name" value="UPF0374 PROTEIN YGAC"/>
    <property type="match status" value="1"/>
</dbReference>
<dbReference type="Pfam" id="PF04167">
    <property type="entry name" value="DUF402"/>
    <property type="match status" value="1"/>
</dbReference>
<dbReference type="PIRSF" id="PIRSF018644">
    <property type="entry name" value="RNA-binding_FAU-1"/>
    <property type="match status" value="1"/>
</dbReference>
<dbReference type="SUPFAM" id="SSF159234">
    <property type="entry name" value="FomD-like"/>
    <property type="match status" value="1"/>
</dbReference>
<accession>C3MXY8</accession>